<sequence>MINAINLPISLNNGPPAGGFGLNTNIFEINIINLGIVIGLLVYLGEGVLTNLLVNRKQTILSTIRDAEERYREATDKLKQARARLQQAKVKAGEIRSNGLARMEREKQDLINAADEDSKRLEESKNSTIRFEEQRAIEQVRQQVSRLALERVLESLKSRFNSELHSRMIDYHIDLIKSMEGTTD</sequence>
<name>ATPF_PSINU</name>
<comment type="function">
    <text evidence="1">F(1)F(0) ATP synthase produces ATP from ADP in the presence of a proton or sodium gradient. F-type ATPases consist of two structural domains, F(1) containing the extramembraneous catalytic core and F(0) containing the membrane proton channel, linked together by a central stalk and a peripheral stalk. During catalysis, ATP synthesis in the catalytic domain of F(1) is coupled via a rotary mechanism of the central stalk subunits to proton translocation.</text>
</comment>
<comment type="function">
    <text evidence="1">Component of the F(0) channel, it forms part of the peripheral stalk, linking F(1) to F(0).</text>
</comment>
<comment type="subunit">
    <text evidence="1">F-type ATPases have 2 components, F(1) - the catalytic core - and F(0) - the membrane proton channel. F(1) has five subunits: alpha(3), beta(3), gamma(1), delta(1), epsilon(1). F(0) has four main subunits: a(1), b(1), b'(1) and c(10-14). The alpha and beta chains form an alternating ring which encloses part of the gamma chain. F(1) is attached to F(0) by a central stalk formed by the gamma and epsilon chains, while a peripheral stalk is formed by the delta, b and b' chains.</text>
</comment>
<comment type="subcellular location">
    <subcellularLocation>
        <location evidence="1">Plastid</location>
        <location evidence="1">Chloroplast thylakoid membrane</location>
        <topology evidence="1">Single-pass membrane protein</topology>
    </subcellularLocation>
</comment>
<comment type="miscellaneous">
    <text>In plastids the F-type ATPase is also known as CF(1)CF(0).</text>
</comment>
<comment type="similarity">
    <text evidence="1">Belongs to the ATPase B chain family.</text>
</comment>
<accession>Q8WI29</accession>
<geneLocation type="chloroplast"/>
<dbReference type="EMBL" id="AP004638">
    <property type="protein sequence ID" value="BAB84202.1"/>
    <property type="molecule type" value="Genomic_DNA"/>
</dbReference>
<dbReference type="RefSeq" id="NP_569615.1">
    <property type="nucleotide sequence ID" value="NC_003386.1"/>
</dbReference>
<dbReference type="SMR" id="Q8WI29"/>
<dbReference type="GeneID" id="2545107"/>
<dbReference type="GO" id="GO:0009535">
    <property type="term" value="C:chloroplast thylakoid membrane"/>
    <property type="evidence" value="ECO:0007669"/>
    <property type="project" value="UniProtKB-SubCell"/>
</dbReference>
<dbReference type="GO" id="GO:0045259">
    <property type="term" value="C:proton-transporting ATP synthase complex"/>
    <property type="evidence" value="ECO:0007669"/>
    <property type="project" value="UniProtKB-KW"/>
</dbReference>
<dbReference type="GO" id="GO:0046933">
    <property type="term" value="F:proton-transporting ATP synthase activity, rotational mechanism"/>
    <property type="evidence" value="ECO:0007669"/>
    <property type="project" value="UniProtKB-UniRule"/>
</dbReference>
<dbReference type="CDD" id="cd06503">
    <property type="entry name" value="ATP-synt_Fo_b"/>
    <property type="match status" value="1"/>
</dbReference>
<dbReference type="HAMAP" id="MF_01398">
    <property type="entry name" value="ATP_synth_b_bprime"/>
    <property type="match status" value="1"/>
</dbReference>
<dbReference type="InterPro" id="IPR002146">
    <property type="entry name" value="ATP_synth_b/b'su_bac/chlpt"/>
</dbReference>
<dbReference type="NCBIfam" id="NF005606">
    <property type="entry name" value="PRK07352.1"/>
    <property type="match status" value="1"/>
</dbReference>
<dbReference type="PANTHER" id="PTHR34264">
    <property type="entry name" value="ATP SYNTHASE SUBUNIT B, CHLOROPLASTIC"/>
    <property type="match status" value="1"/>
</dbReference>
<dbReference type="PANTHER" id="PTHR34264:SF3">
    <property type="entry name" value="ATP SYNTHASE SUBUNIT B, CHLOROPLASTIC"/>
    <property type="match status" value="1"/>
</dbReference>
<dbReference type="Pfam" id="PF00430">
    <property type="entry name" value="ATP-synt_B"/>
    <property type="match status" value="1"/>
</dbReference>
<organism>
    <name type="scientific">Psilotum nudum</name>
    <name type="common">Whisk fern</name>
    <name type="synonym">Lycopodium nudum</name>
    <dbReference type="NCBI Taxonomy" id="3240"/>
    <lineage>
        <taxon>Eukaryota</taxon>
        <taxon>Viridiplantae</taxon>
        <taxon>Streptophyta</taxon>
        <taxon>Embryophyta</taxon>
        <taxon>Tracheophyta</taxon>
        <taxon>Polypodiopsida</taxon>
        <taxon>Ophioglossidae</taxon>
        <taxon>Psilotales</taxon>
        <taxon>Psilotaceae</taxon>
        <taxon>Psilotum</taxon>
    </lineage>
</organism>
<gene>
    <name evidence="1" type="primary">atpF</name>
</gene>
<feature type="chain" id="PRO_0000368976" description="ATP synthase subunit b, chloroplastic">
    <location>
        <begin position="1"/>
        <end position="184"/>
    </location>
</feature>
<feature type="transmembrane region" description="Helical" evidence="1">
    <location>
        <begin position="29"/>
        <end position="49"/>
    </location>
</feature>
<keyword id="KW-0066">ATP synthesis</keyword>
<keyword id="KW-0138">CF(0)</keyword>
<keyword id="KW-0150">Chloroplast</keyword>
<keyword id="KW-0375">Hydrogen ion transport</keyword>
<keyword id="KW-0406">Ion transport</keyword>
<keyword id="KW-0472">Membrane</keyword>
<keyword id="KW-0934">Plastid</keyword>
<keyword id="KW-0793">Thylakoid</keyword>
<keyword id="KW-0812">Transmembrane</keyword>
<keyword id="KW-1133">Transmembrane helix</keyword>
<keyword id="KW-0813">Transport</keyword>
<reference key="1">
    <citation type="journal article" date="2004" name="Mol. Biol. Evol.">
        <title>Chloroplast phylogeny indicates that bryophytes are monophyletic.</title>
        <authorList>
            <person name="Nishiyama T."/>
            <person name="Wolf P.G."/>
            <person name="Kugita M."/>
            <person name="Sinclair R.B."/>
            <person name="Sugita M."/>
            <person name="Sugiura C."/>
            <person name="Wakasugi T."/>
            <person name="Yamada K."/>
            <person name="Yoshinaga K."/>
            <person name="Yamaguchi K."/>
            <person name="Ueda K."/>
            <person name="Hasebe M."/>
        </authorList>
    </citation>
    <scope>NUCLEOTIDE SEQUENCE [LARGE SCALE GENOMIC DNA]</scope>
    <source>
        <strain>Kingyoku</strain>
    </source>
</reference>
<evidence type="ECO:0000255" key="1">
    <source>
        <dbReference type="HAMAP-Rule" id="MF_01398"/>
    </source>
</evidence>
<protein>
    <recommendedName>
        <fullName evidence="1">ATP synthase subunit b, chloroplastic</fullName>
    </recommendedName>
    <alternativeName>
        <fullName evidence="1">ATP synthase F(0) sector subunit b</fullName>
    </alternativeName>
    <alternativeName>
        <fullName evidence="1">ATPase subunit I</fullName>
    </alternativeName>
</protein>
<proteinExistence type="inferred from homology"/>